<feature type="chain" id="PRO_0000136734" description="Tryptophan--tRNA ligase">
    <location>
        <begin position="1"/>
        <end position="381"/>
    </location>
</feature>
<feature type="short sequence motif" description="'HIGH' region">
    <location>
        <begin position="82"/>
        <end position="90"/>
    </location>
</feature>
<feature type="short sequence motif" description="'KMSKS' region">
    <location>
        <begin position="254"/>
        <end position="258"/>
    </location>
</feature>
<protein>
    <recommendedName>
        <fullName evidence="1">Tryptophan--tRNA ligase</fullName>
        <ecNumber evidence="1">6.1.1.2</ecNumber>
    </recommendedName>
    <alternativeName>
        <fullName evidence="1">Tryptophanyl-tRNA synthetase</fullName>
        <shortName evidence="1">TrpRS</shortName>
    </alternativeName>
</protein>
<proteinExistence type="inferred from homology"/>
<sequence>MAQDFNVTPWEVKGKVDYDKLIVQFGTQKITSELKEKIKSIINDELHVMLRRDVFFSHRDLDLVLKDYQDGKGFFLYTGRAPSLGMHIGHLIPFIFTKWLQDKFNVNLYIEITDDEKFMRNPEYTLDQTRQWAYDNILDIIAVGFNPDKTFIFQDTEYIRNMYPIAIKIAKKLTFSEVRATFGLDTSSNIGIIWYPALQIAPTMFEKRRCLIPAGIDQDPYWRLQRDIAESLGYYKAAQIHSKFLPPLTGPEGKMSSSQPETAIYLTDDPKTVERKIMKYAFSGGQPTIELHRKYGGNPDIDVSFQWLYMFFEPDDNKIKKIEEDYRSGALLTGELKQILIEKLNDFLEEHRQKREEAKKLVNVFKYDGELAREMWRKIHE</sequence>
<reference key="1">
    <citation type="journal article" date="2001" name="DNA Res.">
        <title>Complete genome sequence of an aerobic thermoacidophilic Crenarchaeon, Sulfolobus tokodaii strain7.</title>
        <authorList>
            <person name="Kawarabayasi Y."/>
            <person name="Hino Y."/>
            <person name="Horikawa H."/>
            <person name="Jin-no K."/>
            <person name="Takahashi M."/>
            <person name="Sekine M."/>
            <person name="Baba S."/>
            <person name="Ankai A."/>
            <person name="Kosugi H."/>
            <person name="Hosoyama A."/>
            <person name="Fukui S."/>
            <person name="Nagai Y."/>
            <person name="Nishijima K."/>
            <person name="Otsuka R."/>
            <person name="Nakazawa H."/>
            <person name="Takamiya M."/>
            <person name="Kato Y."/>
            <person name="Yoshizawa T."/>
            <person name="Tanaka T."/>
            <person name="Kudoh Y."/>
            <person name="Yamazaki J."/>
            <person name="Kushida N."/>
            <person name="Oguchi A."/>
            <person name="Aoki K."/>
            <person name="Masuda S."/>
            <person name="Yanagii M."/>
            <person name="Nishimura M."/>
            <person name="Yamagishi A."/>
            <person name="Oshima T."/>
            <person name="Kikuchi H."/>
        </authorList>
    </citation>
    <scope>NUCLEOTIDE SEQUENCE [LARGE SCALE GENOMIC DNA]</scope>
    <source>
        <strain>DSM 16993 / JCM 10545 / NBRC 100140 / 7</strain>
    </source>
</reference>
<dbReference type="EC" id="6.1.1.2" evidence="1"/>
<dbReference type="EMBL" id="BA000023">
    <property type="protein sequence ID" value="BAK54171.1"/>
    <property type="molecule type" value="Genomic_DNA"/>
</dbReference>
<dbReference type="RefSeq" id="WP_010978108.1">
    <property type="nucleotide sequence ID" value="NC_003106.2"/>
</dbReference>
<dbReference type="SMR" id="Q976M1"/>
<dbReference type="STRING" id="273063.STK_01690"/>
<dbReference type="KEGG" id="sto:STK_01690"/>
<dbReference type="PATRIC" id="fig|273063.9.peg.208"/>
<dbReference type="eggNOG" id="arCOG01887">
    <property type="taxonomic scope" value="Archaea"/>
</dbReference>
<dbReference type="OrthoDB" id="371821at2157"/>
<dbReference type="Proteomes" id="UP000001015">
    <property type="component" value="Chromosome"/>
</dbReference>
<dbReference type="GO" id="GO:0005737">
    <property type="term" value="C:cytoplasm"/>
    <property type="evidence" value="ECO:0007669"/>
    <property type="project" value="UniProtKB-SubCell"/>
</dbReference>
<dbReference type="GO" id="GO:0005524">
    <property type="term" value="F:ATP binding"/>
    <property type="evidence" value="ECO:0007669"/>
    <property type="project" value="UniProtKB-UniRule"/>
</dbReference>
<dbReference type="GO" id="GO:0004830">
    <property type="term" value="F:tryptophan-tRNA ligase activity"/>
    <property type="evidence" value="ECO:0007669"/>
    <property type="project" value="UniProtKB-UniRule"/>
</dbReference>
<dbReference type="GO" id="GO:0006436">
    <property type="term" value="P:tryptophanyl-tRNA aminoacylation"/>
    <property type="evidence" value="ECO:0007669"/>
    <property type="project" value="UniProtKB-UniRule"/>
</dbReference>
<dbReference type="CDD" id="cd00806">
    <property type="entry name" value="TrpRS_core"/>
    <property type="match status" value="1"/>
</dbReference>
<dbReference type="FunFam" id="1.10.240.10:FF:000007">
    <property type="entry name" value="Tryptophan--tRNA ligase"/>
    <property type="match status" value="1"/>
</dbReference>
<dbReference type="FunFam" id="3.40.50.620:FF:000138">
    <property type="entry name" value="Tryptophan--tRNA ligase"/>
    <property type="match status" value="1"/>
</dbReference>
<dbReference type="Gene3D" id="3.40.50.620">
    <property type="entry name" value="HUPs"/>
    <property type="match status" value="1"/>
</dbReference>
<dbReference type="Gene3D" id="1.10.240.10">
    <property type="entry name" value="Tyrosyl-Transfer RNA Synthetase"/>
    <property type="match status" value="1"/>
</dbReference>
<dbReference type="HAMAP" id="MF_00140_A">
    <property type="entry name" value="Trp_tRNA_synth_A"/>
    <property type="match status" value="1"/>
</dbReference>
<dbReference type="InterPro" id="IPR002305">
    <property type="entry name" value="aa-tRNA-synth_Ic"/>
</dbReference>
<dbReference type="InterPro" id="IPR014729">
    <property type="entry name" value="Rossmann-like_a/b/a_fold"/>
</dbReference>
<dbReference type="InterPro" id="IPR002306">
    <property type="entry name" value="Trp-tRNA-ligase"/>
</dbReference>
<dbReference type="InterPro" id="IPR020653">
    <property type="entry name" value="Tryptophan-tRNA-ligase_arc"/>
</dbReference>
<dbReference type="NCBIfam" id="NF008924">
    <property type="entry name" value="PRK12285.1-1"/>
    <property type="match status" value="1"/>
</dbReference>
<dbReference type="NCBIfam" id="NF008927">
    <property type="entry name" value="PRK12285.1-4"/>
    <property type="match status" value="1"/>
</dbReference>
<dbReference type="NCBIfam" id="TIGR00233">
    <property type="entry name" value="trpS"/>
    <property type="match status" value="1"/>
</dbReference>
<dbReference type="PANTHER" id="PTHR10055:SF1">
    <property type="entry name" value="TRYPTOPHAN--TRNA LIGASE, CYTOPLASMIC"/>
    <property type="match status" value="1"/>
</dbReference>
<dbReference type="PANTHER" id="PTHR10055">
    <property type="entry name" value="TRYPTOPHANYL-TRNA SYNTHETASE"/>
    <property type="match status" value="1"/>
</dbReference>
<dbReference type="Pfam" id="PF00579">
    <property type="entry name" value="tRNA-synt_1b"/>
    <property type="match status" value="1"/>
</dbReference>
<dbReference type="PRINTS" id="PR01039">
    <property type="entry name" value="TRNASYNTHTRP"/>
</dbReference>
<dbReference type="SUPFAM" id="SSF52374">
    <property type="entry name" value="Nucleotidylyl transferase"/>
    <property type="match status" value="1"/>
</dbReference>
<gene>
    <name evidence="1" type="primary">trpS</name>
    <name type="ordered locus">STK_01690</name>
</gene>
<accession>Q976M1</accession>
<accession>F9VMM5</accession>
<keyword id="KW-0030">Aminoacyl-tRNA synthetase</keyword>
<keyword id="KW-0067">ATP-binding</keyword>
<keyword id="KW-0963">Cytoplasm</keyword>
<keyword id="KW-0436">Ligase</keyword>
<keyword id="KW-0547">Nucleotide-binding</keyword>
<keyword id="KW-0648">Protein biosynthesis</keyword>
<keyword id="KW-1185">Reference proteome</keyword>
<comment type="catalytic activity">
    <reaction evidence="1">
        <text>tRNA(Trp) + L-tryptophan + ATP = L-tryptophyl-tRNA(Trp) + AMP + diphosphate + H(+)</text>
        <dbReference type="Rhea" id="RHEA:24080"/>
        <dbReference type="Rhea" id="RHEA-COMP:9671"/>
        <dbReference type="Rhea" id="RHEA-COMP:9705"/>
        <dbReference type="ChEBI" id="CHEBI:15378"/>
        <dbReference type="ChEBI" id="CHEBI:30616"/>
        <dbReference type="ChEBI" id="CHEBI:33019"/>
        <dbReference type="ChEBI" id="CHEBI:57912"/>
        <dbReference type="ChEBI" id="CHEBI:78442"/>
        <dbReference type="ChEBI" id="CHEBI:78535"/>
        <dbReference type="ChEBI" id="CHEBI:456215"/>
        <dbReference type="EC" id="6.1.1.2"/>
    </reaction>
</comment>
<comment type="subcellular location">
    <subcellularLocation>
        <location evidence="1">Cytoplasm</location>
    </subcellularLocation>
</comment>
<comment type="similarity">
    <text evidence="1">Belongs to the class-I aminoacyl-tRNA synthetase family.</text>
</comment>
<name>SYW_SULTO</name>
<evidence type="ECO:0000255" key="1">
    <source>
        <dbReference type="HAMAP-Rule" id="MF_00140"/>
    </source>
</evidence>
<organism>
    <name type="scientific">Sulfurisphaera tokodaii (strain DSM 16993 / JCM 10545 / NBRC 100140 / 7)</name>
    <name type="common">Sulfolobus tokodaii</name>
    <dbReference type="NCBI Taxonomy" id="273063"/>
    <lineage>
        <taxon>Archaea</taxon>
        <taxon>Thermoproteota</taxon>
        <taxon>Thermoprotei</taxon>
        <taxon>Sulfolobales</taxon>
        <taxon>Sulfolobaceae</taxon>
        <taxon>Sulfurisphaera</taxon>
    </lineage>
</organism>